<gene>
    <name type="primary">PSAH2</name>
    <name type="ordered locus">At1g52230</name>
    <name type="ORF">F9I5.11</name>
</gene>
<organism>
    <name type="scientific">Arabidopsis thaliana</name>
    <name type="common">Mouse-ear cress</name>
    <dbReference type="NCBI Taxonomy" id="3702"/>
    <lineage>
        <taxon>Eukaryota</taxon>
        <taxon>Viridiplantae</taxon>
        <taxon>Streptophyta</taxon>
        <taxon>Embryophyta</taxon>
        <taxon>Tracheophyta</taxon>
        <taxon>Spermatophyta</taxon>
        <taxon>Magnoliopsida</taxon>
        <taxon>eudicotyledons</taxon>
        <taxon>Gunneridae</taxon>
        <taxon>Pentapetalae</taxon>
        <taxon>rosids</taxon>
        <taxon>malvids</taxon>
        <taxon>Brassicales</taxon>
        <taxon>Brassicaceae</taxon>
        <taxon>Camelineae</taxon>
        <taxon>Arabidopsis</taxon>
    </lineage>
</organism>
<reference key="1">
    <citation type="submission" date="1999-08" db="EMBL/GenBank/DDBJ databases">
        <title>Sequences and map position of 31 Arabidopsis thaliana cDNAs encoding organellar polypeptides.</title>
        <authorList>
            <person name="Legen J."/>
            <person name="Misera S."/>
            <person name="Herrmann R.G."/>
            <person name="Altschmied L."/>
        </authorList>
    </citation>
    <scope>NUCLEOTIDE SEQUENCE [MRNA]</scope>
    <source>
        <strain>cv. Columbia</strain>
    </source>
</reference>
<reference key="2">
    <citation type="journal article" date="2000" name="Nature">
        <title>Sequence and analysis of chromosome 1 of the plant Arabidopsis thaliana.</title>
        <authorList>
            <person name="Theologis A."/>
            <person name="Ecker J.R."/>
            <person name="Palm C.J."/>
            <person name="Federspiel N.A."/>
            <person name="Kaul S."/>
            <person name="White O."/>
            <person name="Alonso J."/>
            <person name="Altafi H."/>
            <person name="Araujo R."/>
            <person name="Bowman C.L."/>
            <person name="Brooks S.Y."/>
            <person name="Buehler E."/>
            <person name="Chan A."/>
            <person name="Chao Q."/>
            <person name="Chen H."/>
            <person name="Cheuk R.F."/>
            <person name="Chin C.W."/>
            <person name="Chung M.K."/>
            <person name="Conn L."/>
            <person name="Conway A.B."/>
            <person name="Conway A.R."/>
            <person name="Creasy T.H."/>
            <person name="Dewar K."/>
            <person name="Dunn P."/>
            <person name="Etgu P."/>
            <person name="Feldblyum T.V."/>
            <person name="Feng J.-D."/>
            <person name="Fong B."/>
            <person name="Fujii C.Y."/>
            <person name="Gill J.E."/>
            <person name="Goldsmith A.D."/>
            <person name="Haas B."/>
            <person name="Hansen N.F."/>
            <person name="Hughes B."/>
            <person name="Huizar L."/>
            <person name="Hunter J.L."/>
            <person name="Jenkins J."/>
            <person name="Johnson-Hopson C."/>
            <person name="Khan S."/>
            <person name="Khaykin E."/>
            <person name="Kim C.J."/>
            <person name="Koo H.L."/>
            <person name="Kremenetskaia I."/>
            <person name="Kurtz D.B."/>
            <person name="Kwan A."/>
            <person name="Lam B."/>
            <person name="Langin-Hooper S."/>
            <person name="Lee A."/>
            <person name="Lee J.M."/>
            <person name="Lenz C.A."/>
            <person name="Li J.H."/>
            <person name="Li Y.-P."/>
            <person name="Lin X."/>
            <person name="Liu S.X."/>
            <person name="Liu Z.A."/>
            <person name="Luros J.S."/>
            <person name="Maiti R."/>
            <person name="Marziali A."/>
            <person name="Militscher J."/>
            <person name="Miranda M."/>
            <person name="Nguyen M."/>
            <person name="Nierman W.C."/>
            <person name="Osborne B.I."/>
            <person name="Pai G."/>
            <person name="Peterson J."/>
            <person name="Pham P.K."/>
            <person name="Rizzo M."/>
            <person name="Rooney T."/>
            <person name="Rowley D."/>
            <person name="Sakano H."/>
            <person name="Salzberg S.L."/>
            <person name="Schwartz J.R."/>
            <person name="Shinn P."/>
            <person name="Southwick A.M."/>
            <person name="Sun H."/>
            <person name="Tallon L.J."/>
            <person name="Tambunga G."/>
            <person name="Toriumi M.J."/>
            <person name="Town C.D."/>
            <person name="Utterback T."/>
            <person name="Van Aken S."/>
            <person name="Vaysberg M."/>
            <person name="Vysotskaia V.S."/>
            <person name="Walker M."/>
            <person name="Wu D."/>
            <person name="Yu G."/>
            <person name="Fraser C.M."/>
            <person name="Venter J.C."/>
            <person name="Davis R.W."/>
        </authorList>
    </citation>
    <scope>NUCLEOTIDE SEQUENCE [LARGE SCALE GENOMIC DNA]</scope>
    <source>
        <strain>cv. Columbia</strain>
    </source>
</reference>
<reference key="3">
    <citation type="journal article" date="2017" name="Plant J.">
        <title>Araport11: a complete reannotation of the Arabidopsis thaliana reference genome.</title>
        <authorList>
            <person name="Cheng C.Y."/>
            <person name="Krishnakumar V."/>
            <person name="Chan A.P."/>
            <person name="Thibaud-Nissen F."/>
            <person name="Schobel S."/>
            <person name="Town C.D."/>
        </authorList>
    </citation>
    <scope>GENOME REANNOTATION</scope>
    <source>
        <strain>cv. Columbia</strain>
    </source>
</reference>
<reference key="4">
    <citation type="journal article" date="2003" name="Science">
        <title>Empirical analysis of transcriptional activity in the Arabidopsis genome.</title>
        <authorList>
            <person name="Yamada K."/>
            <person name="Lim J."/>
            <person name="Dale J.M."/>
            <person name="Chen H."/>
            <person name="Shinn P."/>
            <person name="Palm C.J."/>
            <person name="Southwick A.M."/>
            <person name="Wu H.C."/>
            <person name="Kim C.J."/>
            <person name="Nguyen M."/>
            <person name="Pham P.K."/>
            <person name="Cheuk R.F."/>
            <person name="Karlin-Newmann G."/>
            <person name="Liu S.X."/>
            <person name="Lam B."/>
            <person name="Sakano H."/>
            <person name="Wu T."/>
            <person name="Yu G."/>
            <person name="Miranda M."/>
            <person name="Quach H.L."/>
            <person name="Tripp M."/>
            <person name="Chang C.H."/>
            <person name="Lee J.M."/>
            <person name="Toriumi M.J."/>
            <person name="Chan M.M."/>
            <person name="Tang C.C."/>
            <person name="Onodera C.S."/>
            <person name="Deng J.M."/>
            <person name="Akiyama K."/>
            <person name="Ansari Y."/>
            <person name="Arakawa T."/>
            <person name="Banh J."/>
            <person name="Banno F."/>
            <person name="Bowser L."/>
            <person name="Brooks S.Y."/>
            <person name="Carninci P."/>
            <person name="Chao Q."/>
            <person name="Choy N."/>
            <person name="Enju A."/>
            <person name="Goldsmith A.D."/>
            <person name="Gurjal M."/>
            <person name="Hansen N.F."/>
            <person name="Hayashizaki Y."/>
            <person name="Johnson-Hopson C."/>
            <person name="Hsuan V.W."/>
            <person name="Iida K."/>
            <person name="Karnes M."/>
            <person name="Khan S."/>
            <person name="Koesema E."/>
            <person name="Ishida J."/>
            <person name="Jiang P.X."/>
            <person name="Jones T."/>
            <person name="Kawai J."/>
            <person name="Kamiya A."/>
            <person name="Meyers C."/>
            <person name="Nakajima M."/>
            <person name="Narusaka M."/>
            <person name="Seki M."/>
            <person name="Sakurai T."/>
            <person name="Satou M."/>
            <person name="Tamse R."/>
            <person name="Vaysberg M."/>
            <person name="Wallender E.K."/>
            <person name="Wong C."/>
            <person name="Yamamura Y."/>
            <person name="Yuan S."/>
            <person name="Shinozaki K."/>
            <person name="Davis R.W."/>
            <person name="Theologis A."/>
            <person name="Ecker J.R."/>
        </authorList>
    </citation>
    <scope>NUCLEOTIDE SEQUENCE [LARGE SCALE MRNA]</scope>
    <source>
        <strain>cv. Columbia</strain>
    </source>
</reference>
<reference key="5">
    <citation type="submission" date="2002-03" db="EMBL/GenBank/DDBJ databases">
        <title>Full-length cDNA from Arabidopsis thaliana.</title>
        <authorList>
            <person name="Brover V.V."/>
            <person name="Troukhan M.E."/>
            <person name="Alexandrov N.A."/>
            <person name="Lu Y.-P."/>
            <person name="Flavell R.B."/>
            <person name="Feldmann K.A."/>
        </authorList>
    </citation>
    <scope>NUCLEOTIDE SEQUENCE [LARGE SCALE MRNA]</scope>
</reference>
<proteinExistence type="evidence at protein level"/>
<dbReference type="EMBL" id="AJ245632">
    <property type="protein sequence ID" value="CAB52750.1"/>
    <property type="molecule type" value="mRNA"/>
</dbReference>
<dbReference type="EMBL" id="AC022354">
    <property type="protein sequence ID" value="AAF29410.1"/>
    <property type="molecule type" value="Genomic_DNA"/>
</dbReference>
<dbReference type="EMBL" id="CP002684">
    <property type="protein sequence ID" value="AEE32772.1"/>
    <property type="molecule type" value="Genomic_DNA"/>
</dbReference>
<dbReference type="EMBL" id="AF385712">
    <property type="protein sequence ID" value="AAK60304.1"/>
    <property type="molecule type" value="mRNA"/>
</dbReference>
<dbReference type="EMBL" id="AY133667">
    <property type="protein sequence ID" value="AAM91497.1"/>
    <property type="molecule type" value="mRNA"/>
</dbReference>
<dbReference type="EMBL" id="AY085302">
    <property type="protein sequence ID" value="AAM62533.1"/>
    <property type="molecule type" value="mRNA"/>
</dbReference>
<dbReference type="PIR" id="C96562">
    <property type="entry name" value="C96562"/>
</dbReference>
<dbReference type="RefSeq" id="NP_175633.1">
    <property type="nucleotide sequence ID" value="NM_104102.3"/>
</dbReference>
<dbReference type="PDB" id="7WFD">
    <property type="method" value="EM"/>
    <property type="resolution" value="3.25 A"/>
    <property type="chains" value="AH=1-145"/>
</dbReference>
<dbReference type="PDB" id="7WFE">
    <property type="method" value="EM"/>
    <property type="resolution" value="3.25 A"/>
    <property type="chains" value="BH=1-145"/>
</dbReference>
<dbReference type="PDB" id="7WG5">
    <property type="method" value="EM"/>
    <property type="resolution" value="3.89 A"/>
    <property type="chains" value="AH/BH=1-145"/>
</dbReference>
<dbReference type="PDB" id="8J6Z">
    <property type="method" value="EM"/>
    <property type="resolution" value="2.79 A"/>
    <property type="chains" value="H=1-145"/>
</dbReference>
<dbReference type="PDB" id="8J7A">
    <property type="method" value="EM"/>
    <property type="resolution" value="3.06 A"/>
    <property type="chains" value="H=1-145"/>
</dbReference>
<dbReference type="PDB" id="8J7B">
    <property type="method" value="EM"/>
    <property type="resolution" value="3.22 A"/>
    <property type="chains" value="H=1-145"/>
</dbReference>
<dbReference type="PDBsum" id="7WFD"/>
<dbReference type="PDBsum" id="7WFE"/>
<dbReference type="PDBsum" id="7WG5"/>
<dbReference type="PDBsum" id="8J6Z"/>
<dbReference type="PDBsum" id="8J7A"/>
<dbReference type="PDBsum" id="8J7B"/>
<dbReference type="EMDB" id="EMD-32462"/>
<dbReference type="EMDB" id="EMD-32463"/>
<dbReference type="EMDB" id="EMD-32477"/>
<dbReference type="EMDB" id="EMD-36021"/>
<dbReference type="EMDB" id="EMD-36036"/>
<dbReference type="EMDB" id="EMD-36037"/>
<dbReference type="SMR" id="Q9SUI6"/>
<dbReference type="BioGRID" id="26878">
    <property type="interactions" value="5"/>
</dbReference>
<dbReference type="FunCoup" id="Q9SUI6">
    <property type="interactions" value="1023"/>
</dbReference>
<dbReference type="STRING" id="3702.Q9SUI6"/>
<dbReference type="TCDB" id="5.B.4.1.1">
    <property type="family name" value="the plant photosystem i supercomplex (psi) family"/>
</dbReference>
<dbReference type="PaxDb" id="3702-AT1G52230.1"/>
<dbReference type="ProteomicsDB" id="226392"/>
<dbReference type="EnsemblPlants" id="AT1G52230.1">
    <property type="protein sequence ID" value="AT1G52230.1"/>
    <property type="gene ID" value="AT1G52230"/>
</dbReference>
<dbReference type="GeneID" id="841653"/>
<dbReference type="Gramene" id="AT1G52230.1">
    <property type="protein sequence ID" value="AT1G52230.1"/>
    <property type="gene ID" value="AT1G52230"/>
</dbReference>
<dbReference type="KEGG" id="ath:AT1G52230"/>
<dbReference type="Araport" id="AT1G52230"/>
<dbReference type="TAIR" id="AT1G52230">
    <property type="gene designation" value="PSAH2"/>
</dbReference>
<dbReference type="eggNOG" id="ENOG502RXI9">
    <property type="taxonomic scope" value="Eukaryota"/>
</dbReference>
<dbReference type="HOGENOM" id="CLU_152855_0_0_1"/>
<dbReference type="InParanoid" id="Q9SUI6"/>
<dbReference type="OMA" id="KWDLYGS"/>
<dbReference type="OrthoDB" id="496139at2759"/>
<dbReference type="PhylomeDB" id="Q9SUI6"/>
<dbReference type="BioCyc" id="ARA:AT1G52230-MONOMER"/>
<dbReference type="CD-CODE" id="4299E36E">
    <property type="entry name" value="Nucleolus"/>
</dbReference>
<dbReference type="PRO" id="PR:Q9SUI6"/>
<dbReference type="Proteomes" id="UP000006548">
    <property type="component" value="Chromosome 1"/>
</dbReference>
<dbReference type="ExpressionAtlas" id="Q9SUI6">
    <property type="expression patterns" value="baseline and differential"/>
</dbReference>
<dbReference type="GO" id="GO:0009507">
    <property type="term" value="C:chloroplast"/>
    <property type="evidence" value="ECO:0007005"/>
    <property type="project" value="TAIR"/>
</dbReference>
<dbReference type="GO" id="GO:0009534">
    <property type="term" value="C:chloroplast thylakoid"/>
    <property type="evidence" value="ECO:0007005"/>
    <property type="project" value="TAIR"/>
</dbReference>
<dbReference type="GO" id="GO:0009535">
    <property type="term" value="C:chloroplast thylakoid membrane"/>
    <property type="evidence" value="ECO:0007005"/>
    <property type="project" value="TAIR"/>
</dbReference>
<dbReference type="GO" id="GO:0005634">
    <property type="term" value="C:nucleus"/>
    <property type="evidence" value="ECO:0007005"/>
    <property type="project" value="TAIR"/>
</dbReference>
<dbReference type="GO" id="GO:0009538">
    <property type="term" value="C:photosystem I reaction center"/>
    <property type="evidence" value="ECO:0007669"/>
    <property type="project" value="InterPro"/>
</dbReference>
<dbReference type="GO" id="GO:0009579">
    <property type="term" value="C:thylakoid"/>
    <property type="evidence" value="ECO:0007005"/>
    <property type="project" value="TAIR"/>
</dbReference>
<dbReference type="GO" id="GO:0015979">
    <property type="term" value="P:photosynthesis"/>
    <property type="evidence" value="ECO:0007669"/>
    <property type="project" value="UniProtKB-KW"/>
</dbReference>
<dbReference type="FunFam" id="1.20.5.220:FF:000003">
    <property type="entry name" value="Photosystem I reaction center subunit VI"/>
    <property type="match status" value="1"/>
</dbReference>
<dbReference type="Gene3D" id="1.20.5.220">
    <property type="match status" value="1"/>
</dbReference>
<dbReference type="InterPro" id="IPR004928">
    <property type="entry name" value="PSI_PsaH"/>
</dbReference>
<dbReference type="PANTHER" id="PTHR34787">
    <property type="entry name" value="PHOTOSYSTEM I REACTION CENTER SUBUNIT VI-2, CHLOROPLASTIC"/>
    <property type="match status" value="1"/>
</dbReference>
<dbReference type="PANTHER" id="PTHR34787:SF1">
    <property type="entry name" value="PHOTOSYSTEM I REACTION CENTER SUBUNIT VI-2, CHLOROPLASTIC"/>
    <property type="match status" value="1"/>
</dbReference>
<dbReference type="Pfam" id="PF03244">
    <property type="entry name" value="PSI_PsaH"/>
    <property type="match status" value="1"/>
</dbReference>
<comment type="function">
    <text>Possible role could be the docking of the LHC I antenna complex to the core complex.</text>
</comment>
<comment type="subcellular location">
    <subcellularLocation>
        <location evidence="3">Plastid</location>
        <location evidence="3">Chloroplast thylakoid membrane</location>
        <topology evidence="3">Single-pass membrane protein</topology>
    </subcellularLocation>
</comment>
<comment type="similarity">
    <text evidence="3">Belongs to the psaH family.</text>
</comment>
<feature type="transit peptide" description="Chloroplast" evidence="1">
    <location>
        <begin position="1"/>
        <end position="50"/>
    </location>
</feature>
<feature type="chain" id="PRO_0000029413" description="Photosystem I reaction center subunit VI-2, chloroplastic">
    <location>
        <begin position="51"/>
        <end position="145"/>
    </location>
</feature>
<feature type="transmembrane region" description="Helical" evidence="1">
    <location>
        <begin position="102"/>
        <end position="118"/>
    </location>
</feature>
<feature type="region of interest" description="Disordered" evidence="2">
    <location>
        <begin position="126"/>
        <end position="145"/>
    </location>
</feature>
<feature type="helix" evidence="4">
    <location>
        <begin position="64"/>
        <end position="67"/>
    </location>
</feature>
<feature type="strand" evidence="4">
    <location>
        <begin position="72"/>
        <end position="74"/>
    </location>
</feature>
<feature type="helix" evidence="4">
    <location>
        <begin position="84"/>
        <end position="93"/>
    </location>
</feature>
<feature type="helix" evidence="4">
    <location>
        <begin position="95"/>
        <end position="98"/>
    </location>
</feature>
<feature type="helix" evidence="4">
    <location>
        <begin position="100"/>
        <end position="120"/>
    </location>
</feature>
<feature type="turn" evidence="4">
    <location>
        <begin position="124"/>
        <end position="126"/>
    </location>
</feature>
<feature type="helix" evidence="4">
    <location>
        <begin position="128"/>
        <end position="131"/>
    </location>
</feature>
<feature type="helix" evidence="4">
    <location>
        <begin position="141"/>
        <end position="143"/>
    </location>
</feature>
<evidence type="ECO:0000255" key="1"/>
<evidence type="ECO:0000256" key="2">
    <source>
        <dbReference type="SAM" id="MobiDB-lite"/>
    </source>
</evidence>
<evidence type="ECO:0000305" key="3"/>
<evidence type="ECO:0007829" key="4">
    <source>
        <dbReference type="PDB" id="8J6Z"/>
    </source>
</evidence>
<protein>
    <recommendedName>
        <fullName>Photosystem I reaction center subunit VI-2, chloroplastic</fullName>
    </recommendedName>
    <alternativeName>
        <fullName>PSI-H1</fullName>
    </alternativeName>
</protein>
<sequence>MASFATIAAVQPSAAVKGLGGSSLAGAKLFIKPSRQSFKTKSTRAGAVVAKYGDKSVYFDLEDLGNTTGQWDVYGSDAPSPYNPLQSKFFETFAAPFTKRGLLLKFLILGGGSLLTYVSANSTGDVLPIKRGPQEPPKLGPRGKL</sequence>
<accession>Q9SUI6</accession>
<name>PSAH2_ARATH</name>
<keyword id="KW-0002">3D-structure</keyword>
<keyword id="KW-0150">Chloroplast</keyword>
<keyword id="KW-0472">Membrane</keyword>
<keyword id="KW-0602">Photosynthesis</keyword>
<keyword id="KW-0603">Photosystem I</keyword>
<keyword id="KW-0934">Plastid</keyword>
<keyword id="KW-1185">Reference proteome</keyword>
<keyword id="KW-0793">Thylakoid</keyword>
<keyword id="KW-0809">Transit peptide</keyword>
<keyword id="KW-0812">Transmembrane</keyword>
<keyword id="KW-1133">Transmembrane helix</keyword>